<dbReference type="EC" id="1.5.1.5" evidence="1"/>
<dbReference type="EC" id="3.5.4.9" evidence="1"/>
<dbReference type="EMBL" id="CP001097">
    <property type="protein sequence ID" value="ACD90181.1"/>
    <property type="molecule type" value="Genomic_DNA"/>
</dbReference>
<dbReference type="RefSeq" id="WP_012466058.1">
    <property type="nucleotide sequence ID" value="NC_010803.1"/>
</dbReference>
<dbReference type="SMR" id="B3ECA6"/>
<dbReference type="STRING" id="290315.Clim_1112"/>
<dbReference type="KEGG" id="cli:Clim_1112"/>
<dbReference type="eggNOG" id="COG0190">
    <property type="taxonomic scope" value="Bacteria"/>
</dbReference>
<dbReference type="HOGENOM" id="CLU_034045_2_1_10"/>
<dbReference type="OrthoDB" id="9803580at2"/>
<dbReference type="UniPathway" id="UPA00193"/>
<dbReference type="Proteomes" id="UP000008841">
    <property type="component" value="Chromosome"/>
</dbReference>
<dbReference type="GO" id="GO:0005829">
    <property type="term" value="C:cytosol"/>
    <property type="evidence" value="ECO:0007669"/>
    <property type="project" value="TreeGrafter"/>
</dbReference>
<dbReference type="GO" id="GO:0004477">
    <property type="term" value="F:methenyltetrahydrofolate cyclohydrolase activity"/>
    <property type="evidence" value="ECO:0007669"/>
    <property type="project" value="UniProtKB-UniRule"/>
</dbReference>
<dbReference type="GO" id="GO:0004488">
    <property type="term" value="F:methylenetetrahydrofolate dehydrogenase (NADP+) activity"/>
    <property type="evidence" value="ECO:0007669"/>
    <property type="project" value="UniProtKB-UniRule"/>
</dbReference>
<dbReference type="GO" id="GO:0000105">
    <property type="term" value="P:L-histidine biosynthetic process"/>
    <property type="evidence" value="ECO:0007669"/>
    <property type="project" value="UniProtKB-KW"/>
</dbReference>
<dbReference type="GO" id="GO:0009086">
    <property type="term" value="P:methionine biosynthetic process"/>
    <property type="evidence" value="ECO:0007669"/>
    <property type="project" value="UniProtKB-KW"/>
</dbReference>
<dbReference type="GO" id="GO:0006164">
    <property type="term" value="P:purine nucleotide biosynthetic process"/>
    <property type="evidence" value="ECO:0007669"/>
    <property type="project" value="UniProtKB-KW"/>
</dbReference>
<dbReference type="GO" id="GO:0035999">
    <property type="term" value="P:tetrahydrofolate interconversion"/>
    <property type="evidence" value="ECO:0007669"/>
    <property type="project" value="UniProtKB-UniRule"/>
</dbReference>
<dbReference type="CDD" id="cd01080">
    <property type="entry name" value="NAD_bind_m-THF_DH_Cyclohyd"/>
    <property type="match status" value="1"/>
</dbReference>
<dbReference type="FunFam" id="3.40.50.720:FF:000189">
    <property type="entry name" value="Bifunctional protein FolD"/>
    <property type="match status" value="1"/>
</dbReference>
<dbReference type="FunFam" id="3.40.50.10860:FF:000005">
    <property type="entry name" value="C-1-tetrahydrofolate synthase, cytoplasmic, putative"/>
    <property type="match status" value="1"/>
</dbReference>
<dbReference type="Gene3D" id="3.40.50.10860">
    <property type="entry name" value="Leucine Dehydrogenase, chain A, domain 1"/>
    <property type="match status" value="1"/>
</dbReference>
<dbReference type="Gene3D" id="3.40.50.720">
    <property type="entry name" value="NAD(P)-binding Rossmann-like Domain"/>
    <property type="match status" value="1"/>
</dbReference>
<dbReference type="HAMAP" id="MF_01576">
    <property type="entry name" value="THF_DHG_CYH"/>
    <property type="match status" value="1"/>
</dbReference>
<dbReference type="InterPro" id="IPR046346">
    <property type="entry name" value="Aminoacid_DH-like_N_sf"/>
</dbReference>
<dbReference type="InterPro" id="IPR036291">
    <property type="entry name" value="NAD(P)-bd_dom_sf"/>
</dbReference>
<dbReference type="InterPro" id="IPR000672">
    <property type="entry name" value="THF_DH/CycHdrlase"/>
</dbReference>
<dbReference type="InterPro" id="IPR020630">
    <property type="entry name" value="THF_DH/CycHdrlase_cat_dom"/>
</dbReference>
<dbReference type="InterPro" id="IPR020867">
    <property type="entry name" value="THF_DH/CycHdrlase_CS"/>
</dbReference>
<dbReference type="InterPro" id="IPR020631">
    <property type="entry name" value="THF_DH/CycHdrlase_NAD-bd_dom"/>
</dbReference>
<dbReference type="NCBIfam" id="NF010771">
    <property type="entry name" value="PRK14174.1"/>
    <property type="match status" value="1"/>
</dbReference>
<dbReference type="NCBIfam" id="NF010783">
    <property type="entry name" value="PRK14186.1"/>
    <property type="match status" value="1"/>
</dbReference>
<dbReference type="PANTHER" id="PTHR48099:SF5">
    <property type="entry name" value="C-1-TETRAHYDROFOLATE SYNTHASE, CYTOPLASMIC"/>
    <property type="match status" value="1"/>
</dbReference>
<dbReference type="PANTHER" id="PTHR48099">
    <property type="entry name" value="C-1-TETRAHYDROFOLATE SYNTHASE, CYTOPLASMIC-RELATED"/>
    <property type="match status" value="1"/>
</dbReference>
<dbReference type="Pfam" id="PF00763">
    <property type="entry name" value="THF_DHG_CYH"/>
    <property type="match status" value="1"/>
</dbReference>
<dbReference type="Pfam" id="PF02882">
    <property type="entry name" value="THF_DHG_CYH_C"/>
    <property type="match status" value="1"/>
</dbReference>
<dbReference type="PRINTS" id="PR00085">
    <property type="entry name" value="THFDHDRGNASE"/>
</dbReference>
<dbReference type="SUPFAM" id="SSF53223">
    <property type="entry name" value="Aminoacid dehydrogenase-like, N-terminal domain"/>
    <property type="match status" value="1"/>
</dbReference>
<dbReference type="SUPFAM" id="SSF51735">
    <property type="entry name" value="NAD(P)-binding Rossmann-fold domains"/>
    <property type="match status" value="1"/>
</dbReference>
<dbReference type="PROSITE" id="PS00767">
    <property type="entry name" value="THF_DHG_CYH_2"/>
    <property type="match status" value="1"/>
</dbReference>
<evidence type="ECO:0000255" key="1">
    <source>
        <dbReference type="HAMAP-Rule" id="MF_01576"/>
    </source>
</evidence>
<accession>B3ECA6</accession>
<keyword id="KW-0028">Amino-acid biosynthesis</keyword>
<keyword id="KW-0368">Histidine biosynthesis</keyword>
<keyword id="KW-0378">Hydrolase</keyword>
<keyword id="KW-0486">Methionine biosynthesis</keyword>
<keyword id="KW-0511">Multifunctional enzyme</keyword>
<keyword id="KW-0521">NADP</keyword>
<keyword id="KW-0554">One-carbon metabolism</keyword>
<keyword id="KW-0560">Oxidoreductase</keyword>
<keyword id="KW-0658">Purine biosynthesis</keyword>
<sequence length="296" mass="31744">MLIIDGKKVSIDLKSELKVRVDEHRAATGKVPGLTVIIVGEDPASQVYVRNKAKSCKETGMHSSVIEMDASTSEEALLSRIRELNDDPDVHGILVQQPLPKQIDEFAVTLAIDPAKDVDGFHPENLGRLVMGHLDKCFVSCTPYGILELLGRYNIETKGKHCVVVGRSNIVGKPMANLMLQKLDATNCTVTICHSATKDIPSYTRQADILIAAIGKAGFITADMVKPGAVVIDVGINRIDDPSTKSGSRLAGDVDYEGVSAIASAMTPVPGGVGPMTIAMLLKNTLQSFERANNLQ</sequence>
<feature type="chain" id="PRO_1000147452" description="Bifunctional protein FolD">
    <location>
        <begin position="1"/>
        <end position="296"/>
    </location>
</feature>
<feature type="binding site" evidence="1">
    <location>
        <begin position="166"/>
        <end position="168"/>
    </location>
    <ligand>
        <name>NADP(+)</name>
        <dbReference type="ChEBI" id="CHEBI:58349"/>
    </ligand>
</feature>
<feature type="binding site" evidence="1">
    <location>
        <position position="195"/>
    </location>
    <ligand>
        <name>NADP(+)</name>
        <dbReference type="ChEBI" id="CHEBI:58349"/>
    </ligand>
</feature>
<feature type="binding site" evidence="1">
    <location>
        <position position="236"/>
    </location>
    <ligand>
        <name>NADP(+)</name>
        <dbReference type="ChEBI" id="CHEBI:58349"/>
    </ligand>
</feature>
<protein>
    <recommendedName>
        <fullName evidence="1">Bifunctional protein FolD</fullName>
    </recommendedName>
    <domain>
        <recommendedName>
            <fullName evidence="1">Methylenetetrahydrofolate dehydrogenase</fullName>
            <ecNumber evidence="1">1.5.1.5</ecNumber>
        </recommendedName>
    </domain>
    <domain>
        <recommendedName>
            <fullName evidence="1">Methenyltetrahydrofolate cyclohydrolase</fullName>
            <ecNumber evidence="1">3.5.4.9</ecNumber>
        </recommendedName>
    </domain>
</protein>
<comment type="function">
    <text evidence="1">Catalyzes the oxidation of 5,10-methylenetetrahydrofolate to 5,10-methenyltetrahydrofolate and then the hydrolysis of 5,10-methenyltetrahydrofolate to 10-formyltetrahydrofolate.</text>
</comment>
<comment type="catalytic activity">
    <reaction evidence="1">
        <text>(6R)-5,10-methylene-5,6,7,8-tetrahydrofolate + NADP(+) = (6R)-5,10-methenyltetrahydrofolate + NADPH</text>
        <dbReference type="Rhea" id="RHEA:22812"/>
        <dbReference type="ChEBI" id="CHEBI:15636"/>
        <dbReference type="ChEBI" id="CHEBI:57455"/>
        <dbReference type="ChEBI" id="CHEBI:57783"/>
        <dbReference type="ChEBI" id="CHEBI:58349"/>
        <dbReference type="EC" id="1.5.1.5"/>
    </reaction>
</comment>
<comment type="catalytic activity">
    <reaction evidence="1">
        <text>(6R)-5,10-methenyltetrahydrofolate + H2O = (6R)-10-formyltetrahydrofolate + H(+)</text>
        <dbReference type="Rhea" id="RHEA:23700"/>
        <dbReference type="ChEBI" id="CHEBI:15377"/>
        <dbReference type="ChEBI" id="CHEBI:15378"/>
        <dbReference type="ChEBI" id="CHEBI:57455"/>
        <dbReference type="ChEBI" id="CHEBI:195366"/>
        <dbReference type="EC" id="3.5.4.9"/>
    </reaction>
</comment>
<comment type="pathway">
    <text evidence="1">One-carbon metabolism; tetrahydrofolate interconversion.</text>
</comment>
<comment type="subunit">
    <text evidence="1">Homodimer.</text>
</comment>
<comment type="similarity">
    <text evidence="1">Belongs to the tetrahydrofolate dehydrogenase/cyclohydrolase family.</text>
</comment>
<gene>
    <name evidence="1" type="primary">folD</name>
    <name type="ordered locus">Clim_1112</name>
</gene>
<reference key="1">
    <citation type="submission" date="2008-05" db="EMBL/GenBank/DDBJ databases">
        <title>Complete sequence of Chlorobium limicola DSM 245.</title>
        <authorList>
            <consortium name="US DOE Joint Genome Institute"/>
            <person name="Lucas S."/>
            <person name="Copeland A."/>
            <person name="Lapidus A."/>
            <person name="Glavina del Rio T."/>
            <person name="Dalin E."/>
            <person name="Tice H."/>
            <person name="Bruce D."/>
            <person name="Goodwin L."/>
            <person name="Pitluck S."/>
            <person name="Schmutz J."/>
            <person name="Larimer F."/>
            <person name="Land M."/>
            <person name="Hauser L."/>
            <person name="Kyrpides N."/>
            <person name="Ovchinnikova G."/>
            <person name="Zhao F."/>
            <person name="Li T."/>
            <person name="Liu Z."/>
            <person name="Overmann J."/>
            <person name="Bryant D.A."/>
            <person name="Richardson P."/>
        </authorList>
    </citation>
    <scope>NUCLEOTIDE SEQUENCE [LARGE SCALE GENOMIC DNA]</scope>
    <source>
        <strain>DSM 245 / NBRC 103803 / 6330</strain>
    </source>
</reference>
<organism>
    <name type="scientific">Chlorobium limicola (strain DSM 245 / NBRC 103803 / 6330)</name>
    <dbReference type="NCBI Taxonomy" id="290315"/>
    <lineage>
        <taxon>Bacteria</taxon>
        <taxon>Pseudomonadati</taxon>
        <taxon>Chlorobiota</taxon>
        <taxon>Chlorobiia</taxon>
        <taxon>Chlorobiales</taxon>
        <taxon>Chlorobiaceae</taxon>
        <taxon>Chlorobium/Pelodictyon group</taxon>
        <taxon>Chlorobium</taxon>
    </lineage>
</organism>
<name>FOLD_CHLL2</name>
<proteinExistence type="inferred from homology"/>